<organism evidence="11">
    <name type="scientific">Plasmodium falciparum (isolate 3D7)</name>
    <dbReference type="NCBI Taxonomy" id="36329"/>
    <lineage>
        <taxon>Eukaryota</taxon>
        <taxon>Sar</taxon>
        <taxon>Alveolata</taxon>
        <taxon>Apicomplexa</taxon>
        <taxon>Aconoidasida</taxon>
        <taxon>Haemosporida</taxon>
        <taxon>Plasmodiidae</taxon>
        <taxon>Plasmodium</taxon>
        <taxon>Plasmodium (Laverania)</taxon>
    </lineage>
</organism>
<evidence type="ECO:0000250" key="1">
    <source>
        <dbReference type="UniProtKB" id="P10599"/>
    </source>
</evidence>
<evidence type="ECO:0000255" key="2"/>
<evidence type="ECO:0000255" key="3">
    <source>
        <dbReference type="PROSITE-ProRule" id="PRU00691"/>
    </source>
</evidence>
<evidence type="ECO:0000269" key="4">
    <source>
    </source>
</evidence>
<evidence type="ECO:0000269" key="5">
    <source>
    </source>
</evidence>
<evidence type="ECO:0000269" key="6">
    <source ref="6"/>
</evidence>
<evidence type="ECO:0000303" key="7">
    <source>
    </source>
</evidence>
<evidence type="ECO:0000305" key="8"/>
<evidence type="ECO:0000305" key="9">
    <source>
    </source>
</evidence>
<evidence type="ECO:0000305" key="10">
    <source ref="6"/>
</evidence>
<evidence type="ECO:0000312" key="11">
    <source>
        <dbReference type="EMBL" id="AAQ76284.1"/>
    </source>
</evidence>
<evidence type="ECO:0000312" key="12">
    <source>
        <dbReference type="EMBL" id="CAX64215.2"/>
    </source>
</evidence>
<evidence type="ECO:0000312" key="13">
    <source>
        <dbReference type="Proteomes" id="UP000001450"/>
    </source>
</evidence>
<evidence type="ECO:0007744" key="14">
    <source>
        <dbReference type="PDB" id="3CXG"/>
    </source>
</evidence>
<evidence type="ECO:0007829" key="15">
    <source>
        <dbReference type="PDB" id="3CXG"/>
    </source>
</evidence>
<protein>
    <recommendedName>
        <fullName evidence="7">Thioredoxin 3</fullName>
        <shortName evidence="7">PfTRX3</shortName>
    </recommendedName>
</protein>
<keyword id="KW-0002">3D-structure</keyword>
<keyword id="KW-1015">Disulfide bond</keyword>
<keyword id="KW-0249">Electron transport</keyword>
<keyword id="KW-0256">Endoplasmic reticulum</keyword>
<keyword id="KW-0472">Membrane</keyword>
<keyword id="KW-0676">Redox-active center</keyword>
<keyword id="KW-1185">Reference proteome</keyword>
<keyword id="KW-0735">Signal-anchor</keyword>
<keyword id="KW-0812">Transmembrane</keyword>
<keyword id="KW-1133">Transmembrane helix</keyword>
<keyword id="KW-0813">Transport</keyword>
<sequence>MALICIGSVCFSLFHIGVIILLIINYFSSHIKKIFPSFFKNPNKEEIDKHIGNILEAKRKNKQLEQSIYIELKNTGSLNQVFSSTQNSSIVIKFGAVWCKPCNKIKEYFKNQLNYYYVTLVDIDVDIHPKLNDQHNIKALPTFEFYFNLNNEWVLVHTVEGANQNDIEKAFQKYCLEKAK</sequence>
<gene>
    <name evidence="7" type="primary">TRX3</name>
    <name evidence="12" type="ORF">PF3D7_0916100</name>
</gene>
<accession>Q4VWQ3</accession>
<accession>C0H538</accession>
<feature type="chain" id="PRO_0000455249" description="Thioredoxin 3">
    <location>
        <begin position="1"/>
        <end position="180"/>
    </location>
</feature>
<feature type="topological domain" description="Cytoplasmic" evidence="8">
    <location>
        <begin position="1"/>
        <end position="3"/>
    </location>
</feature>
<feature type="transmembrane region" description="Helical; Signal-anchor for type II membrane protein" evidence="2">
    <location>
        <begin position="4"/>
        <end position="24"/>
    </location>
</feature>
<feature type="topological domain" description="Lumenal" evidence="8">
    <location>
        <begin position="25"/>
        <end position="180"/>
    </location>
</feature>
<feature type="domain" description="Thioredoxin" evidence="3">
    <location>
        <begin position="29"/>
        <end position="176"/>
    </location>
</feature>
<feature type="active site" description="Nucleophile" evidence="1">
    <location>
        <position position="99"/>
    </location>
</feature>
<feature type="active site" description="Nucleophile" evidence="1">
    <location>
        <position position="102"/>
    </location>
</feature>
<feature type="disulfide bond" description="Redox-active" evidence="3 6 14">
    <location>
        <begin position="99"/>
        <end position="102"/>
    </location>
</feature>
<feature type="strand" evidence="15">
    <location>
        <begin position="67"/>
        <end position="71"/>
    </location>
</feature>
<feature type="helix" evidence="15">
    <location>
        <begin position="77"/>
        <end position="82"/>
    </location>
</feature>
<feature type="strand" evidence="15">
    <location>
        <begin position="88"/>
        <end position="95"/>
    </location>
</feature>
<feature type="helix" evidence="15">
    <location>
        <begin position="100"/>
        <end position="104"/>
    </location>
</feature>
<feature type="helix" evidence="15">
    <location>
        <begin position="106"/>
        <end position="110"/>
    </location>
</feature>
<feature type="helix" evidence="15">
    <location>
        <begin position="111"/>
        <end position="114"/>
    </location>
</feature>
<feature type="strand" evidence="15">
    <location>
        <begin position="119"/>
        <end position="124"/>
    </location>
</feature>
<feature type="turn" evidence="15">
    <location>
        <begin position="125"/>
        <end position="127"/>
    </location>
</feature>
<feature type="helix" evidence="15">
    <location>
        <begin position="129"/>
        <end position="134"/>
    </location>
</feature>
<feature type="strand" evidence="15">
    <location>
        <begin position="139"/>
        <end position="149"/>
    </location>
</feature>
<feature type="strand" evidence="15">
    <location>
        <begin position="152"/>
        <end position="161"/>
    </location>
</feature>
<feature type="helix" evidence="15">
    <location>
        <begin position="164"/>
        <end position="174"/>
    </location>
</feature>
<feature type="strand" evidence="15">
    <location>
        <begin position="175"/>
        <end position="177"/>
    </location>
</feature>
<proteinExistence type="evidence at protein level"/>
<reference evidence="11" key="1">
    <citation type="submission" date="2003-05" db="EMBL/GenBank/DDBJ databases">
        <title>Multiple thioredoxins of the malarial parasite Plasmodium falciparum.</title>
        <authorList>
            <person name="Nickel C."/>
            <person name="Rahlfs S."/>
            <person name="Becker K."/>
        </authorList>
    </citation>
    <scope>NUCLEOTIDE SEQUENCE [MRNA]</scope>
    <source>
        <strain evidence="11">3D7</strain>
    </source>
</reference>
<reference evidence="13" key="2">
    <citation type="journal article" date="2002" name="Nature">
        <title>Genome sequence of the human malaria parasite Plasmodium falciparum.</title>
        <authorList>
            <person name="Gardner M.J."/>
            <person name="Hall N."/>
            <person name="Fung E."/>
            <person name="White O."/>
            <person name="Berriman M."/>
            <person name="Hyman R.W."/>
            <person name="Carlton J.M."/>
            <person name="Pain A."/>
            <person name="Nelson K.E."/>
            <person name="Bowman S."/>
            <person name="Paulsen I.T."/>
            <person name="James K.D."/>
            <person name="Eisen J.A."/>
            <person name="Rutherford K.M."/>
            <person name="Salzberg S.L."/>
            <person name="Craig A."/>
            <person name="Kyes S."/>
            <person name="Chan M.-S."/>
            <person name="Nene V."/>
            <person name="Shallom S.J."/>
            <person name="Suh B."/>
            <person name="Peterson J."/>
            <person name="Angiuoli S."/>
            <person name="Pertea M."/>
            <person name="Allen J."/>
            <person name="Selengut J."/>
            <person name="Haft D."/>
            <person name="Mather M.W."/>
            <person name="Vaidya A.B."/>
            <person name="Martin D.M.A."/>
            <person name="Fairlamb A.H."/>
            <person name="Fraunholz M.J."/>
            <person name="Roos D.S."/>
            <person name="Ralph S.A."/>
            <person name="McFadden G.I."/>
            <person name="Cummings L.M."/>
            <person name="Subramanian G.M."/>
            <person name="Mungall C."/>
            <person name="Venter J.C."/>
            <person name="Carucci D.J."/>
            <person name="Hoffman S.L."/>
            <person name="Newbold C."/>
            <person name="Davis R.W."/>
            <person name="Fraser C.M."/>
            <person name="Barrell B.G."/>
        </authorList>
    </citation>
    <scope>NUCLEOTIDE SEQUENCE [LARGE SCALE GENOMIC DNA]</scope>
    <source>
        <strain evidence="13">3D7</strain>
    </source>
</reference>
<reference evidence="13" key="3">
    <citation type="journal article" date="2002" name="Nature">
        <title>Sequence of Plasmodium falciparum chromosomes 1, 3-9 and 13.</title>
        <authorList>
            <person name="Hall N."/>
            <person name="Pain A."/>
            <person name="Berriman M."/>
            <person name="Churcher C.M."/>
            <person name="Harris B."/>
            <person name="Harris D."/>
            <person name="Mungall K.L."/>
            <person name="Bowman S."/>
            <person name="Atkin R."/>
            <person name="Baker S."/>
            <person name="Barron A."/>
            <person name="Brooks K."/>
            <person name="Buckee C.O."/>
            <person name="Burrows C."/>
            <person name="Cherevach I."/>
            <person name="Chillingworth C."/>
            <person name="Chillingworth T."/>
            <person name="Christodoulou Z."/>
            <person name="Clark L."/>
            <person name="Clark R."/>
            <person name="Corton C."/>
            <person name="Cronin A."/>
            <person name="Davies R.M."/>
            <person name="Davis P."/>
            <person name="Dear P."/>
            <person name="Dearden F."/>
            <person name="Doggett J."/>
            <person name="Feltwell T."/>
            <person name="Goble A."/>
            <person name="Goodhead I."/>
            <person name="Gwilliam R."/>
            <person name="Hamlin N."/>
            <person name="Hance Z."/>
            <person name="Harper D."/>
            <person name="Hauser H."/>
            <person name="Hornsby T."/>
            <person name="Holroyd S."/>
            <person name="Horrocks P."/>
            <person name="Humphray S."/>
            <person name="Jagels K."/>
            <person name="James K.D."/>
            <person name="Johnson D."/>
            <person name="Kerhornou A."/>
            <person name="Knights A."/>
            <person name="Konfortov B."/>
            <person name="Kyes S."/>
            <person name="Larke N."/>
            <person name="Lawson D."/>
            <person name="Lennard N."/>
            <person name="Line A."/>
            <person name="Maddison M."/>
            <person name="Mclean J."/>
            <person name="Mooney P."/>
            <person name="Moule S."/>
            <person name="Murphy L."/>
            <person name="Oliver K."/>
            <person name="Ormond D."/>
            <person name="Price C."/>
            <person name="Quail M.A."/>
            <person name="Rabbinowitsch E."/>
            <person name="Rajandream M.A."/>
            <person name="Rutter S."/>
            <person name="Rutherford K.M."/>
            <person name="Sanders M."/>
            <person name="Simmonds M."/>
            <person name="Seeger K."/>
            <person name="Sharp S."/>
            <person name="Smith R."/>
            <person name="Squares R."/>
            <person name="Squares S."/>
            <person name="Stevens K."/>
            <person name="Taylor K."/>
            <person name="Tivey A."/>
            <person name="Unwin L."/>
            <person name="Whitehead S."/>
            <person name="Woodward J.R."/>
            <person name="Sulston J.E."/>
            <person name="Craig A."/>
            <person name="Newbold C."/>
            <person name="Barrell B.G."/>
        </authorList>
    </citation>
    <scope>NUCLEOTIDE SEQUENCE [LARGE SCALE GENOMIC DNA]</scope>
    <source>
        <strain evidence="13">3D7</strain>
    </source>
</reference>
<reference evidence="8" key="4">
    <citation type="journal article" date="2006" name="Antioxid. Redox Signal.">
        <title>Thioredoxin networks in the malarial parasite Plasmodium falciparum.</title>
        <authorList>
            <person name="Nickel C."/>
            <person name="Rahlfs S."/>
            <person name="Deponte M."/>
            <person name="Koncarevic S."/>
            <person name="Becker K."/>
        </authorList>
    </citation>
    <scope>FUNCTION</scope>
    <scope>DISULFIDE BOND</scope>
</reference>
<reference evidence="8" key="5">
    <citation type="journal article" date="2010" name="PLoS Pathog.">
        <title>Compartmentation of redox metabolism in malaria parasites.</title>
        <authorList>
            <person name="Kehr S."/>
            <person name="Sturm N."/>
            <person name="Rahlfs S."/>
            <person name="Przyborski J.M."/>
            <person name="Becker K."/>
        </authorList>
    </citation>
    <scope>SUBCELLULAR LOCATION</scope>
</reference>
<reference evidence="14" key="6">
    <citation type="submission" date="2008-04" db="PDB data bank">
        <title>Crystal structure of Plasmodium falciparum thioredoxin, PFI0790w.</title>
        <authorList>
            <person name="Wernimont A.K."/>
            <person name="Lew J."/>
            <person name="Kozieradzki I."/>
            <person name="Cossar D."/>
            <person name="Schapira M."/>
            <person name="Bochkarev A."/>
            <person name="Arrowsmith C.H."/>
            <person name="Bountra C."/>
            <person name="Wilkstrom M."/>
            <person name="Edwards A.M."/>
            <person name="Hui R."/>
            <person name="Hills T."/>
            <person name="Pizarro J."/>
        </authorList>
    </citation>
    <scope>X-RAY CRYSTALLOGRAPHY (2.00 ANGSTROMS) OF 66-180</scope>
    <scope>DISULFIDE BOND</scope>
</reference>
<comment type="function">
    <text evidence="4">Participates in various redox reactions through the reversible oxidation of its active center dithiol to a disulfide and catalyzes dithiol-disulfide exchange reactions.</text>
</comment>
<comment type="subcellular location">
    <subcellularLocation>
        <location evidence="5">Endoplasmic reticulum membrane</location>
        <topology evidence="8">Single-pass type II membrane protein</topology>
    </subcellularLocation>
</comment>
<comment type="PTM">
    <text evidence="9 10">The disulfide bond between Cys-99 and Cys-102 acts as a redox-active center and is reduced by thioredoxin reductase TRXR.</text>
</comment>
<comment type="similarity">
    <text evidence="8">Belongs to the thioredoxin family.</text>
</comment>
<dbReference type="EMBL" id="AY306208">
    <property type="protein sequence ID" value="AAQ76284.1"/>
    <property type="molecule type" value="mRNA"/>
</dbReference>
<dbReference type="EMBL" id="AL844508">
    <property type="protein sequence ID" value="CAX64215.2"/>
    <property type="molecule type" value="Genomic_DNA"/>
</dbReference>
<dbReference type="PDB" id="3CXG">
    <property type="method" value="X-ray"/>
    <property type="resolution" value="2.00 A"/>
    <property type="chains" value="A/B=66-180"/>
</dbReference>
<dbReference type="PDBsum" id="3CXG"/>
<dbReference type="SMR" id="Q4VWQ3"/>
<dbReference type="STRING" id="36329.Q4VWQ3"/>
<dbReference type="PaxDb" id="5833-PFI0790w"/>
<dbReference type="EnsemblProtists" id="CAX64215">
    <property type="protein sequence ID" value="CAX64215"/>
    <property type="gene ID" value="PF3D7_0916100"/>
</dbReference>
<dbReference type="VEuPathDB" id="PlasmoDB:PF3D7_0916100"/>
<dbReference type="InParanoid" id="Q4VWQ3"/>
<dbReference type="OrthoDB" id="2121326at2759"/>
<dbReference type="PhylomeDB" id="Q4VWQ3"/>
<dbReference type="Reactome" id="R-PFA-3299685">
    <property type="pathway name" value="Detoxification of Reactive Oxygen Species"/>
</dbReference>
<dbReference type="Reactome" id="R-PFA-499943">
    <property type="pathway name" value="Interconversion of nucleotide di- and triphosphates"/>
</dbReference>
<dbReference type="Reactome" id="R-PFA-5628897">
    <property type="pathway name" value="TP53 Regulates Metabolic Genes"/>
</dbReference>
<dbReference type="Reactome" id="R-PFA-844456">
    <property type="pathway name" value="The NLRP3 inflammasome"/>
</dbReference>
<dbReference type="EvolutionaryTrace" id="Q4VWQ3"/>
<dbReference type="Proteomes" id="UP000001450">
    <property type="component" value="Chromosome 9"/>
</dbReference>
<dbReference type="GO" id="GO:0005783">
    <property type="term" value="C:endoplasmic reticulum"/>
    <property type="evidence" value="ECO:0000314"/>
    <property type="project" value="GeneDB"/>
</dbReference>
<dbReference type="GO" id="GO:0005789">
    <property type="term" value="C:endoplasmic reticulum membrane"/>
    <property type="evidence" value="ECO:0007669"/>
    <property type="project" value="UniProtKB-SubCell"/>
</dbReference>
<dbReference type="CDD" id="cd02947">
    <property type="entry name" value="TRX_family"/>
    <property type="match status" value="1"/>
</dbReference>
<dbReference type="FunFam" id="3.40.30.10:FF:000462">
    <property type="entry name" value="Thioredoxin 3"/>
    <property type="match status" value="1"/>
</dbReference>
<dbReference type="Gene3D" id="3.40.30.10">
    <property type="entry name" value="Glutaredoxin"/>
    <property type="match status" value="1"/>
</dbReference>
<dbReference type="InterPro" id="IPR036249">
    <property type="entry name" value="Thioredoxin-like_sf"/>
</dbReference>
<dbReference type="InterPro" id="IPR013766">
    <property type="entry name" value="Thioredoxin_domain"/>
</dbReference>
<dbReference type="PANTHER" id="PTHR46115">
    <property type="entry name" value="THIOREDOXIN-LIKE PROTEIN 1"/>
    <property type="match status" value="1"/>
</dbReference>
<dbReference type="Pfam" id="PF00085">
    <property type="entry name" value="Thioredoxin"/>
    <property type="match status" value="1"/>
</dbReference>
<dbReference type="SUPFAM" id="SSF52833">
    <property type="entry name" value="Thioredoxin-like"/>
    <property type="match status" value="1"/>
</dbReference>
<name>THIO3_PLAF7</name>